<dbReference type="EMBL" id="AB048701">
    <property type="status" value="NOT_ANNOTATED_CDS"/>
    <property type="molecule type" value="Genomic_DNA"/>
</dbReference>
<dbReference type="SMR" id="P0C681"/>
<dbReference type="Proteomes" id="UP000007932">
    <property type="component" value="Genome"/>
</dbReference>
<dbReference type="GO" id="GO:0033650">
    <property type="term" value="C:host cell mitochondrion"/>
    <property type="evidence" value="ECO:0007669"/>
    <property type="project" value="UniProtKB-SubCell"/>
</dbReference>
<dbReference type="GO" id="GO:0042025">
    <property type="term" value="C:host cell nucleus"/>
    <property type="evidence" value="ECO:0007669"/>
    <property type="project" value="UniProtKB-SubCell"/>
</dbReference>
<dbReference type="GO" id="GO:0006351">
    <property type="term" value="P:DNA-templated transcription"/>
    <property type="evidence" value="ECO:0007669"/>
    <property type="project" value="UniProtKB-UniRule"/>
</dbReference>
<dbReference type="GO" id="GO:0085033">
    <property type="term" value="P:symbiont-mediated activation of host NF-kappaB cascade"/>
    <property type="evidence" value="ECO:0007669"/>
    <property type="project" value="UniProtKB-UniRule"/>
</dbReference>
<dbReference type="GO" id="GO:0039592">
    <property type="term" value="P:symbiont-mediated arrest of host cell cycle during G2/M transition"/>
    <property type="evidence" value="ECO:0007669"/>
    <property type="project" value="UniProtKB-UniRule"/>
</dbReference>
<dbReference type="GO" id="GO:0019079">
    <property type="term" value="P:viral genome replication"/>
    <property type="evidence" value="ECO:0007669"/>
    <property type="project" value="UniProtKB-UniRule"/>
</dbReference>
<dbReference type="HAMAP" id="MF_04074">
    <property type="entry name" value="HBV_X"/>
    <property type="match status" value="1"/>
</dbReference>
<dbReference type="InterPro" id="IPR000236">
    <property type="entry name" value="Transactivation_prot_X"/>
</dbReference>
<dbReference type="Pfam" id="PF00739">
    <property type="entry name" value="X"/>
    <property type="match status" value="1"/>
</dbReference>
<organismHost>
    <name type="scientific">Homo sapiens</name>
    <name type="common">Human</name>
    <dbReference type="NCBI Taxonomy" id="9606"/>
</organismHost>
<organismHost>
    <name type="scientific">Pan troglodytes</name>
    <name type="common">Chimpanzee</name>
    <dbReference type="NCBI Taxonomy" id="9598"/>
</organismHost>
<reference key="1">
    <citation type="journal article" date="2001" name="J. Gen. Virol.">
        <title>A novel variant genotype C of hepatitis B virus identified in isolates from Australian Aborigines: complete genome sequence and phylogenetic relatedness.</title>
        <authorList>
            <person name="Sugauchi F."/>
            <person name="Mizokami M."/>
            <person name="Orito E."/>
            <person name="Ohno T."/>
            <person name="Kato H."/>
            <person name="Suzuki S."/>
            <person name="Kimura Y."/>
            <person name="Ueda R."/>
            <person name="Butterworth L.A."/>
            <person name="Cooksley W.G."/>
        </authorList>
    </citation>
    <scope>NUCLEOTIDE SEQUENCE [GENOMIC DNA]</scope>
</reference>
<reference key="2">
    <citation type="journal article" date="2004" name="J. Virol.">
        <title>The enigmatic X gene of hepatitis B virus.</title>
        <authorList>
            <person name="Bouchard M.J."/>
            <person name="Schneider R.J."/>
        </authorList>
    </citation>
    <scope>REVIEW</scope>
</reference>
<reference key="3">
    <citation type="journal article" date="2006" name="Cancer Sci.">
        <title>Molecular functions and biological roles of hepatitis B virus x protein.</title>
        <authorList>
            <person name="Tang H."/>
            <person name="Oishi N."/>
            <person name="Kaneko S."/>
            <person name="Murakami S."/>
        </authorList>
    </citation>
    <scope>REVIEW</scope>
</reference>
<feature type="chain" id="PRO_0000319911" description="Protein X">
    <location>
        <begin position="1"/>
        <end position="154"/>
    </location>
</feature>
<feature type="region of interest" description="Mitochondrial targeting sequence" evidence="1">
    <location>
        <begin position="68"/>
        <end position="117"/>
    </location>
</feature>
<organism>
    <name type="scientific">Hepatitis B virus genotype D subtype ayw (isolate Australia/AustKW/1991)</name>
    <name type="common">HBV-D</name>
    <dbReference type="NCBI Taxonomy" id="489488"/>
    <lineage>
        <taxon>Viruses</taxon>
        <taxon>Riboviria</taxon>
        <taxon>Pararnavirae</taxon>
        <taxon>Artverviricota</taxon>
        <taxon>Revtraviricetes</taxon>
        <taxon>Blubervirales</taxon>
        <taxon>Hepadnaviridae</taxon>
        <taxon>Orthohepadnavirus</taxon>
        <taxon>Hepatitis B virus</taxon>
        <taxon>hepatitis B virus genotype D</taxon>
    </lineage>
</organism>
<keyword id="KW-1074">Activation of host NF-kappa-B by virus</keyword>
<keyword id="KW-0010">Activator</keyword>
<keyword id="KW-0053">Apoptosis</keyword>
<keyword id="KW-1035">Host cytoplasm</keyword>
<keyword id="KW-1079">Host G2/M cell cycle arrest by virus</keyword>
<keyword id="KW-1045">Host mitochondrion</keyword>
<keyword id="KW-1048">Host nucleus</keyword>
<keyword id="KW-0945">Host-virus interaction</keyword>
<keyword id="KW-1121">Modulation of host cell cycle by virus</keyword>
<keyword id="KW-0804">Transcription</keyword>
<keyword id="KW-0805">Transcription regulation</keyword>
<accession>P0C681</accession>
<name>X_HBVD5</name>
<comment type="function">
    <text evidence="1">Multifunctional protein that plays a role in silencing host antiviral defenses and promoting viral transcription. Does not seem to be essential for HBV infection. May be directly involved in development of cirrhosis and liver cancer (hepatocellular carcinoma). Most of cytosolic activities involve modulation of cytosolic calcium. The effect on apoptosis is controversial depending on the cell types in which the studies have been conducted. May induce apoptosis by localizing in mitochondria and causing loss of mitochondrial membrane potential. May also modulate apoptosis by binding host CFLAR, a key regulator of the death-inducing signaling complex (DISC). Promotes viral transcription by using the host E3 ubiquitin ligase DDB1 to target the SMC5-SMC6 complex to proteasomal degradation. This host complex would otherwise bind to viral episomal DNA, and prevents its transcription. Moderately stimulates transcription of many different viral and cellular transcription elements. Promoters and enhancers stimulated by HBx contain DNA binding sites for NF-kappa-B, AP-1, AP-2, c-EBP, ATF/CREB, or the calcium-activated factor NF-AT.</text>
</comment>
<comment type="subunit">
    <text evidence="1">May form homodimer. May interact with host CEBPA, CFLAR, CREB1, DDB1, E4F1, HBXIP, HSPD1/HSP60, NFKBIA, POLR2E and SMAD4. Interacts with host SMC5-SMC6 complex and induces its degradation. Interacts with host TRPC4AP; leading to prevent ubiquitination of TRPC4AP. Interacts with host PLSCR1; this interaction promotes ubiquitination and degradation of HBx and impairs HBx-mediated cell proliferation.</text>
</comment>
<comment type="subcellular location">
    <subcellularLocation>
        <location evidence="1">Host cytoplasm</location>
    </subcellularLocation>
    <subcellularLocation>
        <location evidence="1">Host nucleus</location>
    </subcellularLocation>
    <subcellularLocation>
        <location evidence="1">Host mitochondrion</location>
    </subcellularLocation>
    <text evidence="1">Mainly cytoplasmic as only a fraction is detected in the nucleus. In cytoplasm, a minor fraction associates with mitochondria or proteasomes.</text>
</comment>
<comment type="PTM">
    <text evidence="1">A fraction may be phosphorylated in insect cells and HepG2 cells, a human hepatoblastoma cell line. Phosphorylated in vitro by host protein kinase C or mitogen-activated protein kinase. N-acetylated in insect cells.</text>
</comment>
<comment type="similarity">
    <text evidence="1">Belongs to the orthohepadnavirus protein X family.</text>
</comment>
<comment type="caution">
    <text>Transcriptional activities should be taken with a grain of salt. As of 2007, all studies demonstrating in vivo interaction between protein X and transcriptional components were performed with significant overexpression of both proteins and in the absence of viral infection.</text>
</comment>
<sequence length="154" mass="16632">MAARLCCQLDPARDVLCLRPVGAESRGRPFSGPLGALSSSSPPAVPTDHGAHLSLRGLPVCAFSSAGPCALRFTSARRMETTVNAHQFLPKVLHKRTLGLSAMSTTDLEAYFKDCLFKDWEELGEELRLKVFVLGGCRHKLVCAPAPCNFFTSA</sequence>
<proteinExistence type="inferred from homology"/>
<gene>
    <name evidence="1" type="primary">X</name>
</gene>
<evidence type="ECO:0000255" key="1">
    <source>
        <dbReference type="HAMAP-Rule" id="MF_04074"/>
    </source>
</evidence>
<protein>
    <recommendedName>
        <fullName evidence="1">Protein X</fullName>
    </recommendedName>
    <alternativeName>
        <fullName evidence="1">HBx</fullName>
    </alternativeName>
    <alternativeName>
        <fullName evidence="1">Peptide X</fullName>
    </alternativeName>
    <alternativeName>
        <fullName evidence="1">pX</fullName>
    </alternativeName>
</protein>